<dbReference type="EC" id="2.3.1.16" evidence="1"/>
<dbReference type="EMBL" id="CP000094">
    <property type="protein sequence ID" value="ABA75615.1"/>
    <property type="molecule type" value="Genomic_DNA"/>
</dbReference>
<dbReference type="RefSeq" id="WP_007953060.1">
    <property type="nucleotide sequence ID" value="NC_007492.2"/>
</dbReference>
<dbReference type="SMR" id="Q3K9D9"/>
<dbReference type="KEGG" id="pfo:Pfl01_3878"/>
<dbReference type="eggNOG" id="COG0183">
    <property type="taxonomic scope" value="Bacteria"/>
</dbReference>
<dbReference type="HOGENOM" id="CLU_031026_2_3_6"/>
<dbReference type="UniPathway" id="UPA00659"/>
<dbReference type="Proteomes" id="UP000002704">
    <property type="component" value="Chromosome"/>
</dbReference>
<dbReference type="GO" id="GO:0005737">
    <property type="term" value="C:cytoplasm"/>
    <property type="evidence" value="ECO:0007669"/>
    <property type="project" value="UniProtKB-SubCell"/>
</dbReference>
<dbReference type="GO" id="GO:0003988">
    <property type="term" value="F:acetyl-CoA C-acyltransferase activity"/>
    <property type="evidence" value="ECO:0007669"/>
    <property type="project" value="UniProtKB-UniRule"/>
</dbReference>
<dbReference type="GO" id="GO:0006635">
    <property type="term" value="P:fatty acid beta-oxidation"/>
    <property type="evidence" value="ECO:0007669"/>
    <property type="project" value="UniProtKB-UniRule"/>
</dbReference>
<dbReference type="GO" id="GO:0010124">
    <property type="term" value="P:phenylacetate catabolic process"/>
    <property type="evidence" value="ECO:0007669"/>
    <property type="project" value="TreeGrafter"/>
</dbReference>
<dbReference type="CDD" id="cd00751">
    <property type="entry name" value="thiolase"/>
    <property type="match status" value="1"/>
</dbReference>
<dbReference type="FunFam" id="3.40.47.10:FF:000010">
    <property type="entry name" value="Acetyl-CoA acetyltransferase (Thiolase)"/>
    <property type="match status" value="1"/>
</dbReference>
<dbReference type="Gene3D" id="3.40.47.10">
    <property type="match status" value="2"/>
</dbReference>
<dbReference type="HAMAP" id="MF_01620">
    <property type="entry name" value="FadA"/>
    <property type="match status" value="1"/>
</dbReference>
<dbReference type="InterPro" id="IPR012805">
    <property type="entry name" value="FadA"/>
</dbReference>
<dbReference type="InterPro" id="IPR002155">
    <property type="entry name" value="Thiolase"/>
</dbReference>
<dbReference type="InterPro" id="IPR016039">
    <property type="entry name" value="Thiolase-like"/>
</dbReference>
<dbReference type="InterPro" id="IPR050215">
    <property type="entry name" value="Thiolase-like_sf_Thiolase"/>
</dbReference>
<dbReference type="InterPro" id="IPR020615">
    <property type="entry name" value="Thiolase_acyl_enz_int_AS"/>
</dbReference>
<dbReference type="InterPro" id="IPR020610">
    <property type="entry name" value="Thiolase_AS"/>
</dbReference>
<dbReference type="InterPro" id="IPR020617">
    <property type="entry name" value="Thiolase_C"/>
</dbReference>
<dbReference type="InterPro" id="IPR020613">
    <property type="entry name" value="Thiolase_CS"/>
</dbReference>
<dbReference type="InterPro" id="IPR020616">
    <property type="entry name" value="Thiolase_N"/>
</dbReference>
<dbReference type="NCBIfam" id="TIGR01930">
    <property type="entry name" value="AcCoA-C-Actrans"/>
    <property type="match status" value="1"/>
</dbReference>
<dbReference type="NCBIfam" id="TIGR02445">
    <property type="entry name" value="fadA"/>
    <property type="match status" value="1"/>
</dbReference>
<dbReference type="NCBIfam" id="NF006510">
    <property type="entry name" value="PRK08947.1"/>
    <property type="match status" value="1"/>
</dbReference>
<dbReference type="PANTHER" id="PTHR43853:SF11">
    <property type="entry name" value="3-KETOACYL-COA THIOLASE FADA"/>
    <property type="match status" value="1"/>
</dbReference>
<dbReference type="PANTHER" id="PTHR43853">
    <property type="entry name" value="3-KETOACYL-COA THIOLASE, PEROXISOMAL"/>
    <property type="match status" value="1"/>
</dbReference>
<dbReference type="Pfam" id="PF02803">
    <property type="entry name" value="Thiolase_C"/>
    <property type="match status" value="1"/>
</dbReference>
<dbReference type="Pfam" id="PF00108">
    <property type="entry name" value="Thiolase_N"/>
    <property type="match status" value="1"/>
</dbReference>
<dbReference type="PIRSF" id="PIRSF000429">
    <property type="entry name" value="Ac-CoA_Ac_transf"/>
    <property type="match status" value="1"/>
</dbReference>
<dbReference type="SUPFAM" id="SSF53901">
    <property type="entry name" value="Thiolase-like"/>
    <property type="match status" value="2"/>
</dbReference>
<dbReference type="PROSITE" id="PS00098">
    <property type="entry name" value="THIOLASE_1"/>
    <property type="match status" value="1"/>
</dbReference>
<dbReference type="PROSITE" id="PS00737">
    <property type="entry name" value="THIOLASE_2"/>
    <property type="match status" value="1"/>
</dbReference>
<dbReference type="PROSITE" id="PS00099">
    <property type="entry name" value="THIOLASE_3"/>
    <property type="match status" value="1"/>
</dbReference>
<reference key="1">
    <citation type="journal article" date="2009" name="Genome Biol.">
        <title>Genomic and genetic analyses of diversity and plant interactions of Pseudomonas fluorescens.</title>
        <authorList>
            <person name="Silby M.W."/>
            <person name="Cerdeno-Tarraga A.M."/>
            <person name="Vernikos G.S."/>
            <person name="Giddens S.R."/>
            <person name="Jackson R.W."/>
            <person name="Preston G.M."/>
            <person name="Zhang X.-X."/>
            <person name="Moon C.D."/>
            <person name="Gehrig S.M."/>
            <person name="Godfrey S.A.C."/>
            <person name="Knight C.G."/>
            <person name="Malone J.G."/>
            <person name="Robinson Z."/>
            <person name="Spiers A.J."/>
            <person name="Harris S."/>
            <person name="Challis G.L."/>
            <person name="Yaxley A.M."/>
            <person name="Harris D."/>
            <person name="Seeger K."/>
            <person name="Murphy L."/>
            <person name="Rutter S."/>
            <person name="Squares R."/>
            <person name="Quail M.A."/>
            <person name="Saunders E."/>
            <person name="Mavromatis K."/>
            <person name="Brettin T.S."/>
            <person name="Bentley S.D."/>
            <person name="Hothersall J."/>
            <person name="Stephens E."/>
            <person name="Thomas C.M."/>
            <person name="Parkhill J."/>
            <person name="Levy S.B."/>
            <person name="Rainey P.B."/>
            <person name="Thomson N.R."/>
        </authorList>
    </citation>
    <scope>NUCLEOTIDE SEQUENCE [LARGE SCALE GENOMIC DNA]</scope>
    <source>
        <strain>Pf0-1</strain>
    </source>
</reference>
<name>FADA_PSEPF</name>
<keyword id="KW-0012">Acyltransferase</keyword>
<keyword id="KW-0963">Cytoplasm</keyword>
<keyword id="KW-0276">Fatty acid metabolism</keyword>
<keyword id="KW-0442">Lipid degradation</keyword>
<keyword id="KW-0443">Lipid metabolism</keyword>
<keyword id="KW-0808">Transferase</keyword>
<gene>
    <name evidence="1" type="primary">fadA</name>
    <name type="ordered locus">Pfl01_3878</name>
</gene>
<evidence type="ECO:0000255" key="1">
    <source>
        <dbReference type="HAMAP-Rule" id="MF_01620"/>
    </source>
</evidence>
<accession>Q3K9D9</accession>
<feature type="chain" id="PRO_0000292897" description="3-ketoacyl-CoA thiolase">
    <location>
        <begin position="1"/>
        <end position="391"/>
    </location>
</feature>
<feature type="active site" description="Acyl-thioester intermediate" evidence="1">
    <location>
        <position position="95"/>
    </location>
</feature>
<feature type="active site" description="Proton acceptor" evidence="1">
    <location>
        <position position="347"/>
    </location>
</feature>
<feature type="active site" description="Proton acceptor" evidence="1">
    <location>
        <position position="377"/>
    </location>
</feature>
<comment type="function">
    <text evidence="1">Catalyzes the final step of fatty acid oxidation in which acetyl-CoA is released and the CoA ester of a fatty acid two carbons shorter is formed.</text>
</comment>
<comment type="catalytic activity">
    <reaction evidence="1">
        <text>an acyl-CoA + acetyl-CoA = a 3-oxoacyl-CoA + CoA</text>
        <dbReference type="Rhea" id="RHEA:21564"/>
        <dbReference type="ChEBI" id="CHEBI:57287"/>
        <dbReference type="ChEBI" id="CHEBI:57288"/>
        <dbReference type="ChEBI" id="CHEBI:58342"/>
        <dbReference type="ChEBI" id="CHEBI:90726"/>
        <dbReference type="EC" id="2.3.1.16"/>
    </reaction>
</comment>
<comment type="pathway">
    <text evidence="1">Lipid metabolism; fatty acid beta-oxidation.</text>
</comment>
<comment type="subunit">
    <text evidence="1">Heterotetramer of two alpha chains (FadB) and two beta chains (FadA).</text>
</comment>
<comment type="subcellular location">
    <subcellularLocation>
        <location evidence="1">Cytoplasm</location>
    </subcellularLocation>
</comment>
<comment type="similarity">
    <text evidence="1">Belongs to the thiolase-like superfamily. Thiolase family.</text>
</comment>
<sequence>MSLNPRDVVIVDFGRTPMGRSKGGMHRNTRAEDMSAHLISKLLERNTKVDPAEVEDVIWGCVNQTLEQGWNIARMASLMTQIPHTSAGQTVSRLCGSSMSALHTAAQAIMTGNGDVFVVGGVEHMGHVSMMHGVDPNPHMSLYAAKASGMMGLTAEMLGKMHGITREQQDAFGVRSHQLAHKATVEGKFKDEIIPMQGYDENGFLKTFDYDETIRPETTLESLAALKPAFNPKGGTVTAGTSSQITDGASCMIVMSAQRAQDLGIQPLAVIRSMAVAGVDPAIMGYGPVPATQKALKRAGLGINDIDFFELNEAFAAQALPVLKDLKVLDKMNEKVNLHGGAIALGHPFGCSGARISGTLLNVMKQNGGTFGVATMCIGLGQGISTVFERV</sequence>
<proteinExistence type="inferred from homology"/>
<protein>
    <recommendedName>
        <fullName evidence="1">3-ketoacyl-CoA thiolase</fullName>
        <ecNumber evidence="1">2.3.1.16</ecNumber>
    </recommendedName>
    <alternativeName>
        <fullName evidence="1">Acetyl-CoA acyltransferase</fullName>
    </alternativeName>
    <alternativeName>
        <fullName evidence="1">Beta-ketothiolase</fullName>
    </alternativeName>
    <alternativeName>
        <fullName evidence="1">Fatty acid oxidation complex subunit beta</fullName>
    </alternativeName>
</protein>
<organism>
    <name type="scientific">Pseudomonas fluorescens (strain Pf0-1)</name>
    <dbReference type="NCBI Taxonomy" id="205922"/>
    <lineage>
        <taxon>Bacteria</taxon>
        <taxon>Pseudomonadati</taxon>
        <taxon>Pseudomonadota</taxon>
        <taxon>Gammaproteobacteria</taxon>
        <taxon>Pseudomonadales</taxon>
        <taxon>Pseudomonadaceae</taxon>
        <taxon>Pseudomonas</taxon>
    </lineage>
</organism>